<keyword id="KW-0418">Kinase</keyword>
<keyword id="KW-0547">Nucleotide-binding</keyword>
<keyword id="KW-0723">Serine/threonine-protein kinase</keyword>
<keyword id="KW-0808">Transferase</keyword>
<feature type="chain" id="PRO_0000196750" description="Putative phosphoenolpyruvate synthase regulatory protein">
    <location>
        <begin position="1"/>
        <end position="273"/>
    </location>
</feature>
<feature type="binding site" evidence="1">
    <location>
        <begin position="153"/>
        <end position="160"/>
    </location>
    <ligand>
        <name>ADP</name>
        <dbReference type="ChEBI" id="CHEBI:456216"/>
    </ligand>
</feature>
<dbReference type="EC" id="2.7.11.33" evidence="1"/>
<dbReference type="EC" id="2.7.4.28" evidence="1"/>
<dbReference type="EMBL" id="BX936398">
    <property type="protein sequence ID" value="CAH21557.1"/>
    <property type="molecule type" value="Genomic_DNA"/>
</dbReference>
<dbReference type="RefSeq" id="WP_002211814.1">
    <property type="nucleotide sequence ID" value="NZ_CP009712.1"/>
</dbReference>
<dbReference type="SMR" id="Q66A13"/>
<dbReference type="KEGG" id="ypo:BZ17_135"/>
<dbReference type="KEGG" id="yps:YPTB2319"/>
<dbReference type="PATRIC" id="fig|273123.14.peg.145"/>
<dbReference type="Proteomes" id="UP000001011">
    <property type="component" value="Chromosome"/>
</dbReference>
<dbReference type="GO" id="GO:0043531">
    <property type="term" value="F:ADP binding"/>
    <property type="evidence" value="ECO:0007669"/>
    <property type="project" value="UniProtKB-UniRule"/>
</dbReference>
<dbReference type="GO" id="GO:0005524">
    <property type="term" value="F:ATP binding"/>
    <property type="evidence" value="ECO:0007669"/>
    <property type="project" value="InterPro"/>
</dbReference>
<dbReference type="GO" id="GO:0003677">
    <property type="term" value="F:DNA binding"/>
    <property type="evidence" value="ECO:0007669"/>
    <property type="project" value="InterPro"/>
</dbReference>
<dbReference type="GO" id="GO:0016776">
    <property type="term" value="F:phosphotransferase activity, phosphate group as acceptor"/>
    <property type="evidence" value="ECO:0007669"/>
    <property type="project" value="UniProtKB-UniRule"/>
</dbReference>
<dbReference type="GO" id="GO:0004674">
    <property type="term" value="F:protein serine/threonine kinase activity"/>
    <property type="evidence" value="ECO:0007669"/>
    <property type="project" value="UniProtKB-UniRule"/>
</dbReference>
<dbReference type="GO" id="GO:0006355">
    <property type="term" value="P:regulation of DNA-templated transcription"/>
    <property type="evidence" value="ECO:0007669"/>
    <property type="project" value="InterPro"/>
</dbReference>
<dbReference type="HAMAP" id="MF_01062">
    <property type="entry name" value="PSRP"/>
    <property type="match status" value="1"/>
</dbReference>
<dbReference type="InterPro" id="IPR005177">
    <property type="entry name" value="Kinase-pyrophosphorylase"/>
</dbReference>
<dbReference type="InterPro" id="IPR026530">
    <property type="entry name" value="PSRP"/>
</dbReference>
<dbReference type="InterPro" id="IPR008917">
    <property type="entry name" value="TF_DNA-bd_sf"/>
</dbReference>
<dbReference type="NCBIfam" id="NF003742">
    <property type="entry name" value="PRK05339.1"/>
    <property type="match status" value="1"/>
</dbReference>
<dbReference type="PANTHER" id="PTHR31756">
    <property type="entry name" value="PYRUVATE, PHOSPHATE DIKINASE REGULATORY PROTEIN 1, CHLOROPLASTIC"/>
    <property type="match status" value="1"/>
</dbReference>
<dbReference type="PANTHER" id="PTHR31756:SF3">
    <property type="entry name" value="PYRUVATE, PHOSPHATE DIKINASE REGULATORY PROTEIN 1, CHLOROPLASTIC"/>
    <property type="match status" value="1"/>
</dbReference>
<dbReference type="Pfam" id="PF03618">
    <property type="entry name" value="Kinase-PPPase"/>
    <property type="match status" value="1"/>
</dbReference>
<dbReference type="SUPFAM" id="SSF47454">
    <property type="entry name" value="A DNA-binding domain in eukaryotic transcription factors"/>
    <property type="match status" value="1"/>
</dbReference>
<organism>
    <name type="scientific">Yersinia pseudotuberculosis serotype I (strain IP32953)</name>
    <dbReference type="NCBI Taxonomy" id="273123"/>
    <lineage>
        <taxon>Bacteria</taxon>
        <taxon>Pseudomonadati</taxon>
        <taxon>Pseudomonadota</taxon>
        <taxon>Gammaproteobacteria</taxon>
        <taxon>Enterobacterales</taxon>
        <taxon>Yersiniaceae</taxon>
        <taxon>Yersinia</taxon>
    </lineage>
</organism>
<comment type="function">
    <text evidence="1">Bifunctional serine/threonine kinase and phosphorylase involved in the regulation of the phosphoenolpyruvate synthase (PEPS) by catalyzing its phosphorylation/dephosphorylation.</text>
</comment>
<comment type="catalytic activity">
    <reaction evidence="1">
        <text>[pyruvate, water dikinase] + ADP = [pyruvate, water dikinase]-phosphate + AMP + H(+)</text>
        <dbReference type="Rhea" id="RHEA:46020"/>
        <dbReference type="Rhea" id="RHEA-COMP:11425"/>
        <dbReference type="Rhea" id="RHEA-COMP:11426"/>
        <dbReference type="ChEBI" id="CHEBI:15378"/>
        <dbReference type="ChEBI" id="CHEBI:43176"/>
        <dbReference type="ChEBI" id="CHEBI:68546"/>
        <dbReference type="ChEBI" id="CHEBI:456215"/>
        <dbReference type="ChEBI" id="CHEBI:456216"/>
        <dbReference type="EC" id="2.7.11.33"/>
    </reaction>
</comment>
<comment type="catalytic activity">
    <reaction evidence="1">
        <text>[pyruvate, water dikinase]-phosphate + phosphate + H(+) = [pyruvate, water dikinase] + diphosphate</text>
        <dbReference type="Rhea" id="RHEA:48580"/>
        <dbReference type="Rhea" id="RHEA-COMP:11425"/>
        <dbReference type="Rhea" id="RHEA-COMP:11426"/>
        <dbReference type="ChEBI" id="CHEBI:15378"/>
        <dbReference type="ChEBI" id="CHEBI:33019"/>
        <dbReference type="ChEBI" id="CHEBI:43176"/>
        <dbReference type="ChEBI" id="CHEBI:43474"/>
        <dbReference type="ChEBI" id="CHEBI:68546"/>
        <dbReference type="EC" id="2.7.4.28"/>
    </reaction>
</comment>
<comment type="similarity">
    <text evidence="1">Belongs to the pyruvate, phosphate/water dikinase regulatory protein family. PSRP subfamily.</text>
</comment>
<sequence length="273" mass="30731">MERCVFYISDGTAITAEVLGHAVLSQFPINVTTFTLPFVENAARAQSVCKQINEIYQDTGVRPLVFYSIISLEVREIIQRSEGFCQDIVQALVAPLQGELGVPPQPVLNRTHGLTESNLDKYDARIAAIDYALAHDDGISLRNLDQAQVILLGVSRCGKTPTSLYLAMQFGIRAANYPFIADDMDNLQLPAALKPFQHKLFGLTINPERLAAIREERRENSRYASLRQCRMEVGEVEALFRKNQIRYLNSTNYSVEEISTKILDILGMSRRMF</sequence>
<gene>
    <name type="ordered locus">YPTB2319</name>
</gene>
<reference key="1">
    <citation type="journal article" date="2004" name="Proc. Natl. Acad. Sci. U.S.A.">
        <title>Insights into the evolution of Yersinia pestis through whole-genome comparison with Yersinia pseudotuberculosis.</title>
        <authorList>
            <person name="Chain P.S.G."/>
            <person name="Carniel E."/>
            <person name="Larimer F.W."/>
            <person name="Lamerdin J."/>
            <person name="Stoutland P.O."/>
            <person name="Regala W.M."/>
            <person name="Georgescu A.M."/>
            <person name="Vergez L.M."/>
            <person name="Land M.L."/>
            <person name="Motin V.L."/>
            <person name="Brubaker R.R."/>
            <person name="Fowler J."/>
            <person name="Hinnebusch J."/>
            <person name="Marceau M."/>
            <person name="Medigue C."/>
            <person name="Simonet M."/>
            <person name="Chenal-Francisque V."/>
            <person name="Souza B."/>
            <person name="Dacheux D."/>
            <person name="Elliott J.M."/>
            <person name="Derbise A."/>
            <person name="Hauser L.J."/>
            <person name="Garcia E."/>
        </authorList>
    </citation>
    <scope>NUCLEOTIDE SEQUENCE [LARGE SCALE GENOMIC DNA]</scope>
    <source>
        <strain>IP32953</strain>
    </source>
</reference>
<name>PSRP_YERPS</name>
<protein>
    <recommendedName>
        <fullName evidence="1">Putative phosphoenolpyruvate synthase regulatory protein</fullName>
        <shortName evidence="1">PEP synthase regulatory protein</shortName>
        <shortName evidence="1">PSRP</shortName>
        <ecNumber evidence="1">2.7.11.33</ecNumber>
        <ecNumber evidence="1">2.7.4.28</ecNumber>
    </recommendedName>
    <alternativeName>
        <fullName evidence="1">Pyruvate, water dikinase regulatory protein</fullName>
    </alternativeName>
</protein>
<evidence type="ECO:0000255" key="1">
    <source>
        <dbReference type="HAMAP-Rule" id="MF_01062"/>
    </source>
</evidence>
<proteinExistence type="inferred from homology"/>
<accession>Q66A13</accession>